<organism>
    <name type="scientific">Platanus occidentalis</name>
    <name type="common">Sycamore</name>
    <name type="synonym">American plane tree</name>
    <dbReference type="NCBI Taxonomy" id="4403"/>
    <lineage>
        <taxon>Eukaryota</taxon>
        <taxon>Viridiplantae</taxon>
        <taxon>Streptophyta</taxon>
        <taxon>Embryophyta</taxon>
        <taxon>Tracheophyta</taxon>
        <taxon>Spermatophyta</taxon>
        <taxon>Magnoliopsida</taxon>
        <taxon>Proteales</taxon>
        <taxon>Platanaceae</taxon>
        <taxon>Platanus</taxon>
    </lineage>
</organism>
<comment type="subcellular location">
    <subcellularLocation>
        <location>Plastid</location>
        <location>Chloroplast</location>
    </subcellularLocation>
</comment>
<comment type="similarity">
    <text evidence="1">Belongs to the bacterial ribosomal protein bL32 family.</text>
</comment>
<accession>Q09FZ8</accession>
<name>RK32_PLAOC</name>
<geneLocation type="chloroplast"/>
<gene>
    <name evidence="1" type="primary">rpl32</name>
</gene>
<protein>
    <recommendedName>
        <fullName evidence="1">Large ribosomal subunit protein bL32c</fullName>
    </recommendedName>
    <alternativeName>
        <fullName evidence="2">50S ribosomal protein L32, chloroplastic</fullName>
    </alternativeName>
</protein>
<reference key="1">
    <citation type="journal article" date="2006" name="BMC Plant Biol.">
        <title>Rapid and accurate pyrosequencing of angiosperm plastid genomes.</title>
        <authorList>
            <person name="Moore M.J."/>
            <person name="Dhingra A."/>
            <person name="Soltis P.S."/>
            <person name="Shaw R."/>
            <person name="Farmerie W.G."/>
            <person name="Folta K.M."/>
            <person name="Soltis D.E."/>
        </authorList>
    </citation>
    <scope>NUCLEOTIDE SEQUENCE [LARGE SCALE GENOMIC DNA]</scope>
</reference>
<dbReference type="EMBL" id="DQ923116">
    <property type="protein sequence ID" value="ABI49827.1"/>
    <property type="molecule type" value="Genomic_DNA"/>
</dbReference>
<dbReference type="RefSeq" id="YP_740613.1">
    <property type="nucleotide sequence ID" value="NC_008335.1"/>
</dbReference>
<dbReference type="SMR" id="Q09FZ8"/>
<dbReference type="GeneID" id="4271351"/>
<dbReference type="GO" id="GO:0009507">
    <property type="term" value="C:chloroplast"/>
    <property type="evidence" value="ECO:0007669"/>
    <property type="project" value="UniProtKB-SubCell"/>
</dbReference>
<dbReference type="GO" id="GO:0015934">
    <property type="term" value="C:large ribosomal subunit"/>
    <property type="evidence" value="ECO:0007669"/>
    <property type="project" value="InterPro"/>
</dbReference>
<dbReference type="GO" id="GO:0003735">
    <property type="term" value="F:structural constituent of ribosome"/>
    <property type="evidence" value="ECO:0007669"/>
    <property type="project" value="InterPro"/>
</dbReference>
<dbReference type="GO" id="GO:0006412">
    <property type="term" value="P:translation"/>
    <property type="evidence" value="ECO:0007669"/>
    <property type="project" value="UniProtKB-UniRule"/>
</dbReference>
<dbReference type="HAMAP" id="MF_00340">
    <property type="entry name" value="Ribosomal_bL32"/>
    <property type="match status" value="1"/>
</dbReference>
<dbReference type="InterPro" id="IPR002677">
    <property type="entry name" value="Ribosomal_bL32"/>
</dbReference>
<dbReference type="InterPro" id="IPR044958">
    <property type="entry name" value="Ribosomal_bL32_plant/cyanobact"/>
</dbReference>
<dbReference type="InterPro" id="IPR011332">
    <property type="entry name" value="Ribosomal_zn-bd"/>
</dbReference>
<dbReference type="PANTHER" id="PTHR36083">
    <property type="entry name" value="50S RIBOSOMAL PROTEIN L32, CHLOROPLASTIC"/>
    <property type="match status" value="1"/>
</dbReference>
<dbReference type="PANTHER" id="PTHR36083:SF1">
    <property type="entry name" value="LARGE RIBOSOMAL SUBUNIT PROTEIN BL32C"/>
    <property type="match status" value="1"/>
</dbReference>
<dbReference type="Pfam" id="PF01783">
    <property type="entry name" value="Ribosomal_L32p"/>
    <property type="match status" value="1"/>
</dbReference>
<dbReference type="SUPFAM" id="SSF57829">
    <property type="entry name" value="Zn-binding ribosomal proteins"/>
    <property type="match status" value="1"/>
</dbReference>
<feature type="chain" id="PRO_0000296621" description="Large ribosomal subunit protein bL32c">
    <location>
        <begin position="1"/>
        <end position="56"/>
    </location>
</feature>
<keyword id="KW-0150">Chloroplast</keyword>
<keyword id="KW-0934">Plastid</keyword>
<keyword id="KW-0687">Ribonucleoprotein</keyword>
<keyword id="KW-0689">Ribosomal protein</keyword>
<proteinExistence type="inferred from homology"/>
<evidence type="ECO:0000255" key="1">
    <source>
        <dbReference type="HAMAP-Rule" id="MF_00340"/>
    </source>
</evidence>
<evidence type="ECO:0000305" key="2"/>
<sequence length="56" mass="6482">MAVPKKRTSISKKRIRKNIWKRKADWASVKAFSLAKSLSTGNSKSFFVRQINKTKK</sequence>